<comment type="function">
    <text evidence="2">Catalyzes the reversible decarboxylation of aromatic carboxylic acids like ferulic acid, p-coumaric acid or cinnamic acid, producing the corresponding vinyl derivatives 4-vinylphenol, 4-vinylguaiacol, and styrene, respectively, which play the role of aroma metabolites.</text>
</comment>
<comment type="catalytic activity">
    <reaction evidence="2">
        <text>(E)-4-coumarate + H(+) = 4-vinylphenol + CO2</text>
        <dbReference type="Rhea" id="RHEA:33227"/>
        <dbReference type="ChEBI" id="CHEBI:1883"/>
        <dbReference type="ChEBI" id="CHEBI:12876"/>
        <dbReference type="ChEBI" id="CHEBI:15378"/>
        <dbReference type="ChEBI" id="CHEBI:16526"/>
        <dbReference type="EC" id="4.1.1.102"/>
    </reaction>
</comment>
<comment type="catalytic activity">
    <reaction evidence="2">
        <text>(E)-cinnamate + H(+) = styrene + CO2</text>
        <dbReference type="Rhea" id="RHEA:46920"/>
        <dbReference type="ChEBI" id="CHEBI:15378"/>
        <dbReference type="ChEBI" id="CHEBI:15669"/>
        <dbReference type="ChEBI" id="CHEBI:16526"/>
        <dbReference type="ChEBI" id="CHEBI:27452"/>
        <dbReference type="EC" id="4.1.1.102"/>
    </reaction>
</comment>
<comment type="catalytic activity">
    <reaction evidence="2">
        <text>(E)-ferulate + H(+) = 2-methoxy-4-vinylphenol + CO2</text>
        <dbReference type="Rhea" id="RHEA:33807"/>
        <dbReference type="ChEBI" id="CHEBI:15378"/>
        <dbReference type="ChEBI" id="CHEBI:16526"/>
        <dbReference type="ChEBI" id="CHEBI:29749"/>
        <dbReference type="ChEBI" id="CHEBI:42438"/>
        <dbReference type="EC" id="4.1.1.102"/>
    </reaction>
</comment>
<comment type="cofactor">
    <cofactor evidence="2 3">
        <name>Mn(2+)</name>
        <dbReference type="ChEBI" id="CHEBI:29035"/>
    </cofactor>
</comment>
<comment type="cofactor">
    <cofactor evidence="2 3">
        <name>prenylated FMN</name>
        <dbReference type="ChEBI" id="CHEBI:87746"/>
    </cofactor>
    <text evidence="2 3">Binds 1 prenylated FMN per subunit.</text>
</comment>
<comment type="subunit">
    <text evidence="2">Homodimer. May form higher order oligomers.</text>
</comment>
<comment type="subcellular location">
    <subcellularLocation>
        <location evidence="2">Cytoplasm</location>
    </subcellularLocation>
</comment>
<comment type="similarity">
    <text evidence="2">Belongs to the UbiD family. UbiD-like/FDC subfamily.</text>
</comment>
<dbReference type="EC" id="4.1.1.102" evidence="2"/>
<dbReference type="EMBL" id="FM992693">
    <property type="protein sequence ID" value="CAX41287.1"/>
    <property type="molecule type" value="Genomic_DNA"/>
</dbReference>
<dbReference type="RefSeq" id="XP_002421128.1">
    <property type="nucleotide sequence ID" value="XM_002421083.1"/>
</dbReference>
<dbReference type="PDB" id="4ZAD">
    <property type="method" value="X-ray"/>
    <property type="resolution" value="2.46 A"/>
    <property type="chains" value="A/B=1-513"/>
</dbReference>
<dbReference type="PDBsum" id="4ZAD"/>
<dbReference type="SMR" id="B9WJ66"/>
<dbReference type="DIP" id="DIP-61588N"/>
<dbReference type="GeneID" id="8048688"/>
<dbReference type="KEGG" id="cdu:CD36_64160"/>
<dbReference type="CGD" id="CAL0000166139">
    <property type="gene designation" value="Cd36_64160"/>
</dbReference>
<dbReference type="VEuPathDB" id="FungiDB:CD36_64160"/>
<dbReference type="eggNOG" id="ENOG502QR5I">
    <property type="taxonomic scope" value="Eukaryota"/>
</dbReference>
<dbReference type="HOGENOM" id="CLU_023348_0_0_1"/>
<dbReference type="OrthoDB" id="4878259at2759"/>
<dbReference type="EvolutionaryTrace" id="B9WJ66"/>
<dbReference type="Proteomes" id="UP000002605">
    <property type="component" value="Chromosome 6"/>
</dbReference>
<dbReference type="GO" id="GO:0005737">
    <property type="term" value="C:cytoplasm"/>
    <property type="evidence" value="ECO:0007669"/>
    <property type="project" value="UniProtKB-SubCell"/>
</dbReference>
<dbReference type="GO" id="GO:0016831">
    <property type="term" value="F:carboxy-lyase activity"/>
    <property type="evidence" value="ECO:0007669"/>
    <property type="project" value="UniProtKB-UniRule"/>
</dbReference>
<dbReference type="GO" id="GO:0046872">
    <property type="term" value="F:metal ion binding"/>
    <property type="evidence" value="ECO:0007669"/>
    <property type="project" value="UniProtKB-KW"/>
</dbReference>
<dbReference type="GO" id="GO:0046281">
    <property type="term" value="P:cinnamic acid catabolic process"/>
    <property type="evidence" value="ECO:0007669"/>
    <property type="project" value="UniProtKB-UniRule"/>
</dbReference>
<dbReference type="GO" id="GO:0033494">
    <property type="term" value="P:ferulate metabolic process"/>
    <property type="evidence" value="ECO:0007669"/>
    <property type="project" value="UniProtKB-UniRule"/>
</dbReference>
<dbReference type="Gene3D" id="1.20.5.4570">
    <property type="match status" value="1"/>
</dbReference>
<dbReference type="Gene3D" id="3.40.1670.10">
    <property type="entry name" value="UbiD C-terminal domain-like"/>
    <property type="match status" value="1"/>
</dbReference>
<dbReference type="HAMAP" id="MF_01983">
    <property type="entry name" value="UbiD_FDC"/>
    <property type="match status" value="1"/>
</dbReference>
<dbReference type="InterPro" id="IPR032903">
    <property type="entry name" value="FDC-like"/>
</dbReference>
<dbReference type="InterPro" id="IPR002830">
    <property type="entry name" value="UbiD"/>
</dbReference>
<dbReference type="InterPro" id="IPR049381">
    <property type="entry name" value="UbiD-like_C"/>
</dbReference>
<dbReference type="InterPro" id="IPR049383">
    <property type="entry name" value="UbiD-like_N"/>
</dbReference>
<dbReference type="InterPro" id="IPR048304">
    <property type="entry name" value="UbiD_Rift_dom"/>
</dbReference>
<dbReference type="NCBIfam" id="TIGR00148">
    <property type="entry name" value="UbiD family decarboxylase"/>
    <property type="match status" value="1"/>
</dbReference>
<dbReference type="PANTHER" id="PTHR30108">
    <property type="entry name" value="3-OCTAPRENYL-4-HYDROXYBENZOATE CARBOXY-LYASE-RELATED"/>
    <property type="match status" value="1"/>
</dbReference>
<dbReference type="PANTHER" id="PTHR30108:SF17">
    <property type="entry name" value="FERULIC ACID DECARBOXYLASE 1"/>
    <property type="match status" value="1"/>
</dbReference>
<dbReference type="Pfam" id="PF01977">
    <property type="entry name" value="UbiD"/>
    <property type="match status" value="1"/>
</dbReference>
<dbReference type="Pfam" id="PF20696">
    <property type="entry name" value="UbiD_C"/>
    <property type="match status" value="1"/>
</dbReference>
<dbReference type="Pfam" id="PF20695">
    <property type="entry name" value="UbiD_N"/>
    <property type="match status" value="1"/>
</dbReference>
<dbReference type="SUPFAM" id="SSF50475">
    <property type="entry name" value="FMN-binding split barrel"/>
    <property type="match status" value="1"/>
</dbReference>
<dbReference type="SUPFAM" id="SSF143968">
    <property type="entry name" value="UbiD C-terminal domain-like"/>
    <property type="match status" value="1"/>
</dbReference>
<reference key="1">
    <citation type="journal article" date="2009" name="Genome Res.">
        <title>Comparative genomics of the fungal pathogens Candida dubliniensis and Candida albicans.</title>
        <authorList>
            <person name="Jackson A.P."/>
            <person name="Gamble J.A."/>
            <person name="Yeomans T."/>
            <person name="Moran G.P."/>
            <person name="Saunders D."/>
            <person name="Harris D."/>
            <person name="Aslett M."/>
            <person name="Barrell J.F."/>
            <person name="Butler G."/>
            <person name="Citiulo F."/>
            <person name="Coleman D.C."/>
            <person name="de Groot P.W.J."/>
            <person name="Goodwin T.J."/>
            <person name="Quail M.A."/>
            <person name="McQuillan J."/>
            <person name="Munro C.A."/>
            <person name="Pain A."/>
            <person name="Poulter R.T."/>
            <person name="Rajandream M.A."/>
            <person name="Renauld H."/>
            <person name="Spiering M.J."/>
            <person name="Tivey A."/>
            <person name="Gow N.A.R."/>
            <person name="Barrell B."/>
            <person name="Sullivan D.J."/>
            <person name="Berriman M."/>
        </authorList>
    </citation>
    <scope>NUCLEOTIDE SEQUENCE [LARGE SCALE GENOMIC DNA]</scope>
    <source>
        <strain>CD36 / ATCC MYA-646 / CBS 7987 / NCPF 3949 / NRRL Y-17841</strain>
    </source>
</reference>
<reference key="2">
    <citation type="journal article" date="2015" name="Nature">
        <title>New cofactor supports alpha,beta-unsaturated acid decarboxylation via 1,3-dipolar cycloaddition.</title>
        <authorList>
            <person name="Payne K.A."/>
            <person name="White M.D."/>
            <person name="Fisher K."/>
            <person name="Khara B."/>
            <person name="Bailey S.S."/>
            <person name="Parker D."/>
            <person name="Rattray N.J."/>
            <person name="Trivedi D.K."/>
            <person name="Goodacre R."/>
            <person name="Beveridge R."/>
            <person name="Barran P."/>
            <person name="Rigby S.E."/>
            <person name="Scrutton N.S."/>
            <person name="Hay S."/>
            <person name="Leys D."/>
        </authorList>
    </citation>
    <scope>X-RAY CRYSTALLOGRAPHY (2.46 ANGSTROMS) IN COMPLEX WITH PRFMN AND MANGANESE</scope>
</reference>
<organism>
    <name type="scientific">Candida dubliniensis (strain CD36 / ATCC MYA-646 / CBS 7987 / NCPF 3949 / NRRL Y-17841)</name>
    <name type="common">Yeast</name>
    <dbReference type="NCBI Taxonomy" id="573826"/>
    <lineage>
        <taxon>Eukaryota</taxon>
        <taxon>Fungi</taxon>
        <taxon>Dikarya</taxon>
        <taxon>Ascomycota</taxon>
        <taxon>Saccharomycotina</taxon>
        <taxon>Pichiomycetes</taxon>
        <taxon>Debaryomycetaceae</taxon>
        <taxon>Candida/Lodderomyces clade</taxon>
        <taxon>Candida</taxon>
    </lineage>
</organism>
<protein>
    <recommendedName>
        <fullName evidence="2 4">Ferulic acid decarboxylase 1</fullName>
        <ecNumber evidence="2">4.1.1.102</ecNumber>
    </recommendedName>
    <alternativeName>
        <fullName evidence="2">Phenacrylate decarboxylase</fullName>
    </alternativeName>
</protein>
<gene>
    <name evidence="1 2" type="primary">FDC1</name>
    <name type="ORF">CD36_64160</name>
</gene>
<proteinExistence type="evidence at protein level"/>
<keyword id="KW-0002">3D-structure</keyword>
<keyword id="KW-0963">Cytoplasm</keyword>
<keyword id="KW-0210">Decarboxylase</keyword>
<keyword id="KW-0285">Flavoprotein</keyword>
<keyword id="KW-0288">FMN</keyword>
<keyword id="KW-0456">Lyase</keyword>
<keyword id="KW-0464">Manganese</keyword>
<keyword id="KW-0479">Metal-binding</keyword>
<feature type="chain" id="PRO_0000434530" description="Ferulic acid decarboxylase 1">
    <location>
        <begin position="1"/>
        <end position="513"/>
    </location>
</feature>
<feature type="active site" description="Proton donor" evidence="2">
    <location>
        <position position="289"/>
    </location>
</feature>
<feature type="binding site" evidence="2 3">
    <location>
        <begin position="174"/>
        <end position="179"/>
    </location>
    <ligand>
        <name>prenylated FMN</name>
        <dbReference type="ChEBI" id="CHEBI:87746"/>
    </ligand>
</feature>
<feature type="binding site" evidence="2 3">
    <location>
        <position position="174"/>
    </location>
    <ligand>
        <name>Mn(2+)</name>
        <dbReference type="ChEBI" id="CHEBI:29035"/>
    </ligand>
</feature>
<feature type="binding site" evidence="2 3">
    <location>
        <begin position="196"/>
        <end position="197"/>
    </location>
    <ligand>
        <name>prenylated FMN</name>
        <dbReference type="ChEBI" id="CHEBI:87746"/>
    </ligand>
</feature>
<feature type="binding site" evidence="2">
    <location>
        <position position="197"/>
    </location>
    <ligand>
        <name>Mn(2+)</name>
        <dbReference type="ChEBI" id="CHEBI:29035"/>
    </ligand>
</feature>
<feature type="binding site" evidence="2 3">
    <location>
        <position position="240"/>
    </location>
    <ligand>
        <name>Mn(2+)</name>
        <dbReference type="ChEBI" id="CHEBI:29035"/>
    </ligand>
</feature>
<feature type="binding site" evidence="2">
    <location>
        <position position="240"/>
    </location>
    <ligand>
        <name>prenylated FMN</name>
        <dbReference type="ChEBI" id="CHEBI:87746"/>
    </ligand>
</feature>
<feature type="binding site" evidence="2 3">
    <location>
        <position position="405"/>
    </location>
    <ligand>
        <name>prenylated FMN</name>
        <dbReference type="ChEBI" id="CHEBI:87746"/>
    </ligand>
</feature>
<feature type="turn" evidence="5">
    <location>
        <begin position="5"/>
        <end position="7"/>
    </location>
</feature>
<feature type="helix" evidence="5">
    <location>
        <begin position="9"/>
        <end position="19"/>
    </location>
</feature>
<feature type="strand" evidence="5">
    <location>
        <begin position="22"/>
        <end position="25"/>
    </location>
</feature>
<feature type="helix" evidence="5">
    <location>
        <begin position="34"/>
        <end position="45"/>
    </location>
</feature>
<feature type="strand" evidence="5">
    <location>
        <begin position="49"/>
        <end position="52"/>
    </location>
</feature>
<feature type="turn" evidence="5">
    <location>
        <begin position="64"/>
        <end position="66"/>
    </location>
</feature>
<feature type="strand" evidence="5">
    <location>
        <begin position="69"/>
        <end position="71"/>
    </location>
</feature>
<feature type="strand" evidence="5">
    <location>
        <begin position="79"/>
        <end position="81"/>
    </location>
</feature>
<feature type="helix" evidence="5">
    <location>
        <begin position="85"/>
        <end position="90"/>
    </location>
</feature>
<feature type="helix" evidence="5">
    <location>
        <begin position="99"/>
        <end position="108"/>
    </location>
</feature>
<feature type="helix" evidence="5">
    <location>
        <begin position="112"/>
        <end position="114"/>
    </location>
</feature>
<feature type="helix" evidence="5">
    <location>
        <begin position="123"/>
        <end position="125"/>
    </location>
</feature>
<feature type="helix" evidence="5">
    <location>
        <begin position="127"/>
        <end position="130"/>
    </location>
</feature>
<feature type="strand" evidence="5">
    <location>
        <begin position="131"/>
        <end position="134"/>
    </location>
</feature>
<feature type="turn" evidence="5">
    <location>
        <begin position="135"/>
        <end position="137"/>
    </location>
</feature>
<feature type="helix" evidence="5">
    <location>
        <begin position="140"/>
        <end position="142"/>
    </location>
</feature>
<feature type="strand" evidence="5">
    <location>
        <begin position="158"/>
        <end position="160"/>
    </location>
</feature>
<feature type="strand" evidence="5">
    <location>
        <begin position="162"/>
        <end position="166"/>
    </location>
</feature>
<feature type="strand" evidence="5">
    <location>
        <begin position="173"/>
        <end position="176"/>
    </location>
</feature>
<feature type="strand" evidence="5">
    <location>
        <begin position="180"/>
        <end position="184"/>
    </location>
</feature>
<feature type="strand" evidence="5">
    <location>
        <begin position="187"/>
        <end position="189"/>
    </location>
</feature>
<feature type="helix" evidence="5">
    <location>
        <begin position="197"/>
        <end position="207"/>
    </location>
</feature>
<feature type="strand" evidence="5">
    <location>
        <begin position="213"/>
        <end position="221"/>
    </location>
</feature>
<feature type="helix" evidence="5">
    <location>
        <begin position="224"/>
        <end position="230"/>
    </location>
</feature>
<feature type="helix" evidence="5">
    <location>
        <begin position="240"/>
        <end position="247"/>
    </location>
</feature>
<feature type="strand" evidence="5">
    <location>
        <begin position="253"/>
        <end position="256"/>
    </location>
</feature>
<feature type="strand" evidence="5">
    <location>
        <begin position="258"/>
        <end position="261"/>
    </location>
</feature>
<feature type="strand" evidence="5">
    <location>
        <begin position="263"/>
        <end position="267"/>
    </location>
</feature>
<feature type="strand" evidence="5">
    <location>
        <begin position="269"/>
        <end position="284"/>
    </location>
</feature>
<feature type="strand" evidence="5">
    <location>
        <begin position="292"/>
        <end position="294"/>
    </location>
</feature>
<feature type="strand" evidence="5">
    <location>
        <begin position="300"/>
        <end position="312"/>
    </location>
</feature>
<feature type="strand" evidence="5">
    <location>
        <begin position="317"/>
        <end position="319"/>
    </location>
</feature>
<feature type="strand" evidence="5">
    <location>
        <begin position="325"/>
        <end position="328"/>
    </location>
</feature>
<feature type="helix" evidence="5">
    <location>
        <begin position="329"/>
        <end position="332"/>
    </location>
</feature>
<feature type="helix" evidence="5">
    <location>
        <begin position="334"/>
        <end position="347"/>
    </location>
</feature>
<feature type="helix" evidence="5">
    <location>
        <begin position="352"/>
        <end position="355"/>
    </location>
</feature>
<feature type="strand" evidence="5">
    <location>
        <begin position="356"/>
        <end position="360"/>
    </location>
</feature>
<feature type="helix" evidence="5">
    <location>
        <begin position="363"/>
        <end position="365"/>
    </location>
</feature>
<feature type="strand" evidence="5">
    <location>
        <begin position="369"/>
        <end position="374"/>
    </location>
</feature>
<feature type="helix" evidence="5">
    <location>
        <begin position="376"/>
        <end position="381"/>
    </location>
</feature>
<feature type="helix" evidence="5">
    <location>
        <begin position="386"/>
        <end position="399"/>
    </location>
</feature>
<feature type="turn" evidence="5">
    <location>
        <begin position="401"/>
        <end position="409"/>
    </location>
</feature>
<feature type="strand" evidence="5">
    <location>
        <begin position="412"/>
        <end position="417"/>
    </location>
</feature>
<feature type="helix" evidence="5">
    <location>
        <begin position="425"/>
        <end position="434"/>
    </location>
</feature>
<feature type="turn" evidence="5">
    <location>
        <begin position="438"/>
        <end position="441"/>
    </location>
</feature>
<feature type="strand" evidence="5">
    <location>
        <begin position="442"/>
        <end position="445"/>
    </location>
</feature>
<feature type="helix" evidence="5">
    <location>
        <begin position="455"/>
        <end position="458"/>
    </location>
</feature>
<feature type="helix" evidence="5">
    <location>
        <begin position="462"/>
        <end position="465"/>
    </location>
</feature>
<feature type="strand" evidence="5">
    <location>
        <begin position="470"/>
        <end position="476"/>
    </location>
</feature>
<feature type="helix" evidence="5">
    <location>
        <begin position="478"/>
        <end position="481"/>
    </location>
</feature>
<feature type="helix" evidence="5">
    <location>
        <begin position="493"/>
        <end position="495"/>
    </location>
</feature>
<feature type="helix" evidence="5">
    <location>
        <begin position="498"/>
        <end position="506"/>
    </location>
</feature>
<feature type="helix" evidence="5">
    <location>
        <begin position="508"/>
        <end position="511"/>
    </location>
</feature>
<accession>B9WJ66</accession>
<sequence>MSLNPALKFRDFIQVLKNEGDLIEIDTEVDPNLEVGAITRKAYENKLAAPLFNNLKQDPENIDPKNLFRILGCPGGLRGFGNDHARIALHLGLDSQTPMKEIIDFLVANRNPKKYIPPVLVPNDQSPHKKHHLTKEQIDLTKLPVPLLHHGDGGKFIQTYGMWVLQTPDKSWTNWSIARGMVHDSKSITGLVINPQHVKQVSDAWVAAGKGDKIPFALCFGVPPAAILVSSMPIPDGATEAEYIGGLCNQAVPVVKCETNDLEVPADCEMVFEGYLDRDTLVREGPFGEMHGYCFPKDHHTQPLYRVNHISYRDQAIMPISNPGLCTDETHTLIGGLVSAETKYLISQHPVLSKIVEDVFTPYEAQALWLAVKINTHELVKLKTNAKELSNLVGDFLFRSKECYKVCSILHEIILVGDDIDIFDFKQLIWAYTTRHTPVQDQLYFDDVKPFALAPFASQGPLIKTRQGGKCVTTCIFPKQFTDPDFEFVTCNFNGYPEEVKNKISQNWDKYYK</sequence>
<evidence type="ECO:0000250" key="1">
    <source>
        <dbReference type="UniProtKB" id="Q03034"/>
    </source>
</evidence>
<evidence type="ECO:0000255" key="2">
    <source>
        <dbReference type="HAMAP-Rule" id="MF_03196"/>
    </source>
</evidence>
<evidence type="ECO:0000269" key="3">
    <source>
    </source>
</evidence>
<evidence type="ECO:0000303" key="4">
    <source>
    </source>
</evidence>
<evidence type="ECO:0007829" key="5">
    <source>
        <dbReference type="PDB" id="4ZAD"/>
    </source>
</evidence>
<name>FDC1_CANDC</name>